<reference key="1">
    <citation type="journal article" date="2005" name="PLoS Biol.">
        <title>Major structural differences and novel potential virulence mechanisms from the genomes of multiple Campylobacter species.</title>
        <authorList>
            <person name="Fouts D.E."/>
            <person name="Mongodin E.F."/>
            <person name="Mandrell R.E."/>
            <person name="Miller W.G."/>
            <person name="Rasko D.A."/>
            <person name="Ravel J."/>
            <person name="Brinkac L.M."/>
            <person name="DeBoy R.T."/>
            <person name="Parker C.T."/>
            <person name="Daugherty S.C."/>
            <person name="Dodson R.J."/>
            <person name="Durkin A.S."/>
            <person name="Madupu R."/>
            <person name="Sullivan S.A."/>
            <person name="Shetty J.U."/>
            <person name="Ayodeji M.A."/>
            <person name="Shvartsbeyn A."/>
            <person name="Schatz M.C."/>
            <person name="Badger J.H."/>
            <person name="Fraser C.M."/>
            <person name="Nelson K.E."/>
        </authorList>
    </citation>
    <scope>NUCLEOTIDE SEQUENCE [LARGE SCALE GENOMIC DNA]</scope>
    <source>
        <strain>RM1221</strain>
    </source>
</reference>
<protein>
    <recommendedName>
        <fullName evidence="1">Tryptophan--tRNA ligase</fullName>
        <ecNumber evidence="1">6.1.1.2</ecNumber>
    </recommendedName>
    <alternativeName>
        <fullName evidence="1">Tryptophanyl-tRNA synthetase</fullName>
        <shortName evidence="1">TrpRS</shortName>
    </alternativeName>
</protein>
<keyword id="KW-0030">Aminoacyl-tRNA synthetase</keyword>
<keyword id="KW-0067">ATP-binding</keyword>
<keyword id="KW-0963">Cytoplasm</keyword>
<keyword id="KW-0436">Ligase</keyword>
<keyword id="KW-0547">Nucleotide-binding</keyword>
<keyword id="KW-0648">Protein biosynthesis</keyword>
<dbReference type="EC" id="6.1.1.2" evidence="1"/>
<dbReference type="EMBL" id="CP000025">
    <property type="protein sequence ID" value="AAW35026.1"/>
    <property type="molecule type" value="Genomic_DNA"/>
</dbReference>
<dbReference type="RefSeq" id="WP_002858719.1">
    <property type="nucleotide sequence ID" value="NC_003912.7"/>
</dbReference>
<dbReference type="SMR" id="Q5HW79"/>
<dbReference type="KEGG" id="cjr:CJE0437"/>
<dbReference type="HOGENOM" id="CLU_029244_1_1_7"/>
<dbReference type="GO" id="GO:0005829">
    <property type="term" value="C:cytosol"/>
    <property type="evidence" value="ECO:0007669"/>
    <property type="project" value="TreeGrafter"/>
</dbReference>
<dbReference type="GO" id="GO:0005524">
    <property type="term" value="F:ATP binding"/>
    <property type="evidence" value="ECO:0007669"/>
    <property type="project" value="UniProtKB-UniRule"/>
</dbReference>
<dbReference type="GO" id="GO:0004830">
    <property type="term" value="F:tryptophan-tRNA ligase activity"/>
    <property type="evidence" value="ECO:0007669"/>
    <property type="project" value="UniProtKB-UniRule"/>
</dbReference>
<dbReference type="GO" id="GO:0006436">
    <property type="term" value="P:tryptophanyl-tRNA aminoacylation"/>
    <property type="evidence" value="ECO:0007669"/>
    <property type="project" value="UniProtKB-UniRule"/>
</dbReference>
<dbReference type="CDD" id="cd00806">
    <property type="entry name" value="TrpRS_core"/>
    <property type="match status" value="1"/>
</dbReference>
<dbReference type="FunFam" id="1.10.240.10:FF:000005">
    <property type="entry name" value="Tryptophan--tRNA ligase"/>
    <property type="match status" value="1"/>
</dbReference>
<dbReference type="Gene3D" id="3.40.50.620">
    <property type="entry name" value="HUPs"/>
    <property type="match status" value="1"/>
</dbReference>
<dbReference type="Gene3D" id="1.10.240.10">
    <property type="entry name" value="Tyrosyl-Transfer RNA Synthetase"/>
    <property type="match status" value="1"/>
</dbReference>
<dbReference type="HAMAP" id="MF_00140_B">
    <property type="entry name" value="Trp_tRNA_synth_B"/>
    <property type="match status" value="1"/>
</dbReference>
<dbReference type="InterPro" id="IPR001412">
    <property type="entry name" value="aa-tRNA-synth_I_CS"/>
</dbReference>
<dbReference type="InterPro" id="IPR002305">
    <property type="entry name" value="aa-tRNA-synth_Ic"/>
</dbReference>
<dbReference type="InterPro" id="IPR014729">
    <property type="entry name" value="Rossmann-like_a/b/a_fold"/>
</dbReference>
<dbReference type="InterPro" id="IPR002306">
    <property type="entry name" value="Trp-tRNA-ligase"/>
</dbReference>
<dbReference type="InterPro" id="IPR024109">
    <property type="entry name" value="Trp-tRNA-ligase_bac-type"/>
</dbReference>
<dbReference type="InterPro" id="IPR050203">
    <property type="entry name" value="Trp-tRNA_synthetase"/>
</dbReference>
<dbReference type="NCBIfam" id="TIGR00233">
    <property type="entry name" value="trpS"/>
    <property type="match status" value="1"/>
</dbReference>
<dbReference type="PANTHER" id="PTHR43766">
    <property type="entry name" value="TRYPTOPHAN--TRNA LIGASE, MITOCHONDRIAL"/>
    <property type="match status" value="1"/>
</dbReference>
<dbReference type="PANTHER" id="PTHR43766:SF1">
    <property type="entry name" value="TRYPTOPHAN--TRNA LIGASE, MITOCHONDRIAL"/>
    <property type="match status" value="1"/>
</dbReference>
<dbReference type="Pfam" id="PF00579">
    <property type="entry name" value="tRNA-synt_1b"/>
    <property type="match status" value="1"/>
</dbReference>
<dbReference type="PRINTS" id="PR01039">
    <property type="entry name" value="TRNASYNTHTRP"/>
</dbReference>
<dbReference type="SUPFAM" id="SSF52374">
    <property type="entry name" value="Nucleotidylyl transferase"/>
    <property type="match status" value="1"/>
</dbReference>
<dbReference type="PROSITE" id="PS00178">
    <property type="entry name" value="AA_TRNA_LIGASE_I"/>
    <property type="match status" value="1"/>
</dbReference>
<comment type="function">
    <text evidence="1">Catalyzes the attachment of tryptophan to tRNA(Trp).</text>
</comment>
<comment type="catalytic activity">
    <reaction evidence="1">
        <text>tRNA(Trp) + L-tryptophan + ATP = L-tryptophyl-tRNA(Trp) + AMP + diphosphate + H(+)</text>
        <dbReference type="Rhea" id="RHEA:24080"/>
        <dbReference type="Rhea" id="RHEA-COMP:9671"/>
        <dbReference type="Rhea" id="RHEA-COMP:9705"/>
        <dbReference type="ChEBI" id="CHEBI:15378"/>
        <dbReference type="ChEBI" id="CHEBI:30616"/>
        <dbReference type="ChEBI" id="CHEBI:33019"/>
        <dbReference type="ChEBI" id="CHEBI:57912"/>
        <dbReference type="ChEBI" id="CHEBI:78442"/>
        <dbReference type="ChEBI" id="CHEBI:78535"/>
        <dbReference type="ChEBI" id="CHEBI:456215"/>
        <dbReference type="EC" id="6.1.1.2"/>
    </reaction>
</comment>
<comment type="subunit">
    <text evidence="1">Homodimer.</text>
</comment>
<comment type="subcellular location">
    <subcellularLocation>
        <location evidence="1">Cytoplasm</location>
    </subcellularLocation>
</comment>
<comment type="similarity">
    <text evidence="1">Belongs to the class-I aminoacyl-tRNA synthetase family.</text>
</comment>
<feature type="chain" id="PRO_0000136614" description="Tryptophan--tRNA ligase">
    <location>
        <begin position="1"/>
        <end position="319"/>
    </location>
</feature>
<feature type="short sequence motif" description="'HIGH' region" evidence="1">
    <location>
        <begin position="9"/>
        <end position="17"/>
    </location>
</feature>
<feature type="short sequence motif" description="'KMSKS' region" evidence="1">
    <location>
        <begin position="189"/>
        <end position="193"/>
    </location>
</feature>
<feature type="binding site" evidence="1">
    <location>
        <begin position="8"/>
        <end position="10"/>
    </location>
    <ligand>
        <name>ATP</name>
        <dbReference type="ChEBI" id="CHEBI:30616"/>
    </ligand>
</feature>
<feature type="binding site" evidence="1">
    <location>
        <begin position="16"/>
        <end position="17"/>
    </location>
    <ligand>
        <name>ATP</name>
        <dbReference type="ChEBI" id="CHEBI:30616"/>
    </ligand>
</feature>
<feature type="binding site" evidence="1">
    <location>
        <position position="131"/>
    </location>
    <ligand>
        <name>L-tryptophan</name>
        <dbReference type="ChEBI" id="CHEBI:57912"/>
    </ligand>
</feature>
<feature type="binding site" evidence="1">
    <location>
        <begin position="143"/>
        <end position="145"/>
    </location>
    <ligand>
        <name>ATP</name>
        <dbReference type="ChEBI" id="CHEBI:30616"/>
    </ligand>
</feature>
<feature type="binding site" evidence="1">
    <location>
        <position position="182"/>
    </location>
    <ligand>
        <name>ATP</name>
        <dbReference type="ChEBI" id="CHEBI:30616"/>
    </ligand>
</feature>
<feature type="binding site" evidence="1">
    <location>
        <begin position="189"/>
        <end position="193"/>
    </location>
    <ligand>
        <name>ATP</name>
        <dbReference type="ChEBI" id="CHEBI:30616"/>
    </ligand>
</feature>
<proteinExistence type="inferred from homology"/>
<name>SYW_CAMJR</name>
<sequence length="319" mass="36084">MRVLTGLQPSGDLHIGNYFGAIKQMVDAQEKSQMFMFIANYHAMTSSQDGEKLKQNSLKAAAAFLSLGIDPQKSVFWLQSDVKEVMELYWILSQFTPMGLLERAHSYKDKVAKGLSASHGLFSYPVLMAADILLFDTRIVPVGKDQIQHVEIARDIALKVNNEWGEIFTLPEARVNEEVAVVVGTDGAKMSKSYQNTIDIFSSEKTLKKQISSIVTDSTALEDPKDHENCNIFKIAKLFLDESGQKELQIRYEKGGEGYGHFKIYLNELVNAYFKEAREKYNELLEKPSHLKEILDFGATKARKIAQEKMQKIYEKIGL</sequence>
<gene>
    <name evidence="1" type="primary">trpS</name>
    <name type="ordered locus">CJE0437</name>
</gene>
<evidence type="ECO:0000255" key="1">
    <source>
        <dbReference type="HAMAP-Rule" id="MF_00140"/>
    </source>
</evidence>
<accession>Q5HW79</accession>
<organism>
    <name type="scientific">Campylobacter jejuni (strain RM1221)</name>
    <dbReference type="NCBI Taxonomy" id="195099"/>
    <lineage>
        <taxon>Bacteria</taxon>
        <taxon>Pseudomonadati</taxon>
        <taxon>Campylobacterota</taxon>
        <taxon>Epsilonproteobacteria</taxon>
        <taxon>Campylobacterales</taxon>
        <taxon>Campylobacteraceae</taxon>
        <taxon>Campylobacter</taxon>
    </lineage>
</organism>